<proteinExistence type="evidence at protein level"/>
<protein>
    <recommendedName>
        <fullName>56 kDa type-specific antigen</fullName>
        <shortName>TSA</shortName>
    </recommendedName>
    <alternativeName>
        <fullName>56 kDa scrub typhus antigen</fullName>
    </alternativeName>
    <alternativeName>
        <fullName>STA56</fullName>
    </alternativeName>
    <alternativeName>
        <fullName>TST56</fullName>
    </alternativeName>
</protein>
<organism>
    <name type="scientific">Orientia tsutsugamushi</name>
    <name type="common">Rickettsia tsutsugamushi</name>
    <dbReference type="NCBI Taxonomy" id="784"/>
    <lineage>
        <taxon>Bacteria</taxon>
        <taxon>Pseudomonadati</taxon>
        <taxon>Pseudomonadota</taxon>
        <taxon>Alphaproteobacteria</taxon>
        <taxon>Rickettsiales</taxon>
        <taxon>Rickettsiaceae</taxon>
        <taxon>Rickettsieae</taxon>
        <taxon>Orientia</taxon>
    </lineage>
</organism>
<name>TSAT_ORITS</name>
<sequence length="529" mass="56115">MKKIMLIASAMSALSLPFSASAIELGDEGGLECGPYAKVGVVGGMITGVESTRLDPADAGGKKQLPLTTSMPFGGTLAAGMTIAPGFRAELGVMYLANVKAEVESGKTGSDADIRSGADSPMPQRYKLTPPQPTIMPISIADRDLGVDIPNVPQGGANHLGDNLGANDIRRADDRITWLKNYAGVDYMVPDPNNPQARIVNPVLLNIPQGPPNANPRQAMQPCSILNHDHWRHLVVGITAMSNANKPSVSPIKVLSEKIVQIYRDVKPFARVAGIEVPSDPLPNSASVEQIQNKMQELNDILDEIRDSFDGCIGGNAFANQIQLNFRIPQAQQQGQGQQQQQAQATAQEAAAAAAVRVLNNNDQIIKLYKDLVKLKRHAGIKKAMEELAAQDGGCNGGGDNKKKRGASEDSDAGGASKGGKGKETKETEFDLSMIVGQVKLYADLFTTESFSIYAGLGAGLAYTSGKIDGVDIKANTGMVASGALGVAINAAEGVYVDIEGSYMHSFSKIEEKYSINPLMASFGVRYNF</sequence>
<dbReference type="EMBL" id="M63382">
    <property type="protein sequence ID" value="AAA26397.1"/>
    <property type="molecule type" value="Genomic_DNA"/>
</dbReference>
<dbReference type="PIR" id="A42804">
    <property type="entry name" value="A42804"/>
</dbReference>
<dbReference type="RefSeq" id="WP_045916090.1">
    <property type="nucleotide sequence ID" value="NZ_LS398550.1"/>
</dbReference>
<dbReference type="GO" id="GO:0005886">
    <property type="term" value="C:plasma membrane"/>
    <property type="evidence" value="ECO:0007669"/>
    <property type="project" value="UniProtKB-SubCell"/>
</dbReference>
<dbReference type="Gene3D" id="2.40.160.20">
    <property type="match status" value="1"/>
</dbReference>
<dbReference type="InterPro" id="IPR011250">
    <property type="entry name" value="OMP/PagP_b-brl"/>
</dbReference>
<dbReference type="InterPro" id="IPR004933">
    <property type="entry name" value="TSA"/>
</dbReference>
<dbReference type="NCBIfam" id="NF033390">
    <property type="entry name" value="Orientia_TSA56"/>
    <property type="match status" value="1"/>
</dbReference>
<dbReference type="Pfam" id="PF03249">
    <property type="entry name" value="TSA"/>
    <property type="match status" value="1"/>
</dbReference>
<dbReference type="PRINTS" id="PR01707">
    <property type="entry name" value="56KDTSANTIGN"/>
</dbReference>
<dbReference type="SUPFAM" id="SSF56925">
    <property type="entry name" value="OMPA-like"/>
    <property type="match status" value="1"/>
</dbReference>
<comment type="function">
    <text>May be an adherent factor for rickettsial adsorption to the host-cell surface and a determinant of virulence of individual rickettsial strain. It is the major outer membrane protein.</text>
</comment>
<comment type="subcellular location">
    <subcellularLocation>
        <location>Cell membrane</location>
        <topology>Multi-pass membrane protein</topology>
    </subcellularLocation>
</comment>
<evidence type="ECO:0000255" key="1"/>
<evidence type="ECO:0000256" key="2">
    <source>
        <dbReference type="SAM" id="MobiDB-lite"/>
    </source>
</evidence>
<accession>P37918</accession>
<reference key="1">
    <citation type="journal article" date="1992" name="J. Biol. Chem.">
        <title>Diversity of immunodominant 56-kDa type-specific antigen (TSA) of Rickettsia tsutsugamushi. Sequence and comparative analyses of the genes encoding TSA homologues from four antigenic variants.</title>
        <authorList>
            <person name="Ohashi N."/>
            <person name="Nashimoto H."/>
            <person name="Ikeda H."/>
            <person name="Tamura A."/>
        </authorList>
    </citation>
    <scope>NUCLEOTIDE SEQUENCE [GENOMIC DNA]</scope>
    <source>
        <strain>Kato</strain>
    </source>
</reference>
<reference key="2">
    <citation type="journal article" date="1989" name="Infect. Immun.">
        <title>Purification and partial characterization of a type-specific antigen of Rickettsia tsutsugamushi.</title>
        <authorList>
            <person name="Ohashi N."/>
            <person name="Tamura A."/>
            <person name="Ohta M."/>
            <person name="Hayashi K."/>
        </authorList>
    </citation>
    <scope>PARTIAL PROTEIN SEQUENCE</scope>
    <source>
        <strain>Kato</strain>
    </source>
</reference>
<keyword id="KW-1003">Cell membrane</keyword>
<keyword id="KW-0903">Direct protein sequencing</keyword>
<keyword id="KW-0472">Membrane</keyword>
<keyword id="KW-0732">Signal</keyword>
<keyword id="KW-0812">Transmembrane</keyword>
<keyword id="KW-1133">Transmembrane helix</keyword>
<keyword id="KW-0843">Virulence</keyword>
<feature type="signal peptide">
    <location>
        <begin position="1"/>
        <end position="22"/>
    </location>
</feature>
<feature type="chain" id="PRO_0000022595" description="56 kDa type-specific antigen">
    <location>
        <begin position="23"/>
        <end position="529"/>
    </location>
</feature>
<feature type="transmembrane region" description="Helical" evidence="1">
    <location>
        <begin position="67"/>
        <end position="87"/>
    </location>
</feature>
<feature type="transmembrane region" description="Helical" evidence="1">
    <location>
        <begin position="477"/>
        <end position="492"/>
    </location>
</feature>
<feature type="region of interest" description="Disordered" evidence="2">
    <location>
        <begin position="106"/>
        <end position="134"/>
    </location>
</feature>
<feature type="region of interest" description="Disordered" evidence="2">
    <location>
        <begin position="392"/>
        <end position="424"/>
    </location>
</feature>
<feature type="compositionally biased region" description="Basic and acidic residues" evidence="2">
    <location>
        <begin position="106"/>
        <end position="116"/>
    </location>
</feature>